<reference key="1">
    <citation type="submission" date="1995-09" db="EMBL/GenBank/DDBJ databases">
        <title>Suppressors of loss of yeast casein kinase 1 function define the four subunits of a novel putative adaptin complex.</title>
        <authorList>
            <person name="Robinson L.C."/>
            <person name="Engle H.M."/>
            <person name="Panek H.R."/>
        </authorList>
    </citation>
    <scope>NUCLEOTIDE SEQUENCE [GENOMIC DNA]</scope>
</reference>
<reference key="2">
    <citation type="journal article" date="1997" name="Yeast">
        <title>Analysis of an 11.6 kb region from the right arm of chromosome VII of Saccharomyces cerevisiae between the RAD2 and the MES1 genes reveals the presence of three new genes.</title>
        <authorList>
            <person name="Clemente M.L."/>
            <person name="Sartori G."/>
            <person name="Cardazzo B."/>
            <person name="Carignani G."/>
        </authorList>
    </citation>
    <scope>NUCLEOTIDE SEQUENCE [GENOMIC DNA]</scope>
    <source>
        <strain>ATCC 96604 / S288c / FY1679</strain>
    </source>
</reference>
<reference key="3">
    <citation type="journal article" date="1997" name="Nature">
        <title>The nucleotide sequence of Saccharomyces cerevisiae chromosome VII.</title>
        <authorList>
            <person name="Tettelin H."/>
            <person name="Agostoni-Carbone M.L."/>
            <person name="Albermann K."/>
            <person name="Albers M."/>
            <person name="Arroyo J."/>
            <person name="Backes U."/>
            <person name="Barreiros T."/>
            <person name="Bertani I."/>
            <person name="Bjourson A.J."/>
            <person name="Brueckner M."/>
            <person name="Bruschi C.V."/>
            <person name="Carignani G."/>
            <person name="Castagnoli L."/>
            <person name="Cerdan E."/>
            <person name="Clemente M.L."/>
            <person name="Coblenz A."/>
            <person name="Coglievina M."/>
            <person name="Coissac E."/>
            <person name="Defoor E."/>
            <person name="Del Bino S."/>
            <person name="Delius H."/>
            <person name="Delneri D."/>
            <person name="de Wergifosse P."/>
            <person name="Dujon B."/>
            <person name="Durand P."/>
            <person name="Entian K.-D."/>
            <person name="Eraso P."/>
            <person name="Escribano V."/>
            <person name="Fabiani L."/>
            <person name="Fartmann B."/>
            <person name="Feroli F."/>
            <person name="Feuermann M."/>
            <person name="Frontali L."/>
            <person name="Garcia-Gonzalez M."/>
            <person name="Garcia-Saez M.I."/>
            <person name="Goffeau A."/>
            <person name="Guerreiro P."/>
            <person name="Hani J."/>
            <person name="Hansen M."/>
            <person name="Hebling U."/>
            <person name="Hernandez K."/>
            <person name="Heumann K."/>
            <person name="Hilger F."/>
            <person name="Hofmann B."/>
            <person name="Indge K.J."/>
            <person name="James C.M."/>
            <person name="Klima R."/>
            <person name="Koetter P."/>
            <person name="Kramer B."/>
            <person name="Kramer W."/>
            <person name="Lauquin G."/>
            <person name="Leuther H."/>
            <person name="Louis E.J."/>
            <person name="Maillier E."/>
            <person name="Marconi A."/>
            <person name="Martegani E."/>
            <person name="Mazon M.J."/>
            <person name="Mazzoni C."/>
            <person name="McReynolds A.D.K."/>
            <person name="Melchioretto P."/>
            <person name="Mewes H.-W."/>
            <person name="Minenkova O."/>
            <person name="Mueller-Auer S."/>
            <person name="Nawrocki A."/>
            <person name="Netter P."/>
            <person name="Neu R."/>
            <person name="Nombela C."/>
            <person name="Oliver S.G."/>
            <person name="Panzeri L."/>
            <person name="Paoluzi S."/>
            <person name="Plevani P."/>
            <person name="Portetelle D."/>
            <person name="Portillo F."/>
            <person name="Potier S."/>
            <person name="Purnelle B."/>
            <person name="Rieger M."/>
            <person name="Riles L."/>
            <person name="Rinaldi T."/>
            <person name="Robben J."/>
            <person name="Rodrigues-Pousada C."/>
            <person name="Rodriguez-Belmonte E."/>
            <person name="Rodriguez-Torres A.M."/>
            <person name="Rose M."/>
            <person name="Ruzzi M."/>
            <person name="Saliola M."/>
            <person name="Sanchez-Perez M."/>
            <person name="Schaefer B."/>
            <person name="Schaefer M."/>
            <person name="Scharfe M."/>
            <person name="Schmidheini T."/>
            <person name="Schreer A."/>
            <person name="Skala J."/>
            <person name="Souciet J.-L."/>
            <person name="Steensma H.Y."/>
            <person name="Talla E."/>
            <person name="Thierry A."/>
            <person name="Vandenbol M."/>
            <person name="van der Aart Q.J.M."/>
            <person name="Van Dyck L."/>
            <person name="Vanoni M."/>
            <person name="Verhasselt P."/>
            <person name="Voet M."/>
            <person name="Volckaert G."/>
            <person name="Wambutt R."/>
            <person name="Watson M.D."/>
            <person name="Weber N."/>
            <person name="Wedler E."/>
            <person name="Wedler H."/>
            <person name="Wipfli P."/>
            <person name="Wolf K."/>
            <person name="Wright L.F."/>
            <person name="Zaccaria P."/>
            <person name="Zimmermann M."/>
            <person name="Zollner A."/>
            <person name="Kleine K."/>
        </authorList>
    </citation>
    <scope>NUCLEOTIDE SEQUENCE [LARGE SCALE GENOMIC DNA]</scope>
    <source>
        <strain>ATCC 204508 / S288c</strain>
    </source>
</reference>
<reference key="4">
    <citation type="journal article" date="2014" name="G3 (Bethesda)">
        <title>The reference genome sequence of Saccharomyces cerevisiae: Then and now.</title>
        <authorList>
            <person name="Engel S.R."/>
            <person name="Dietrich F.S."/>
            <person name="Fisk D.G."/>
            <person name="Binkley G."/>
            <person name="Balakrishnan R."/>
            <person name="Costanzo M.C."/>
            <person name="Dwight S.S."/>
            <person name="Hitz B.C."/>
            <person name="Karra K."/>
            <person name="Nash R.S."/>
            <person name="Weng S."/>
            <person name="Wong E.D."/>
            <person name="Lloyd P."/>
            <person name="Skrzypek M.S."/>
            <person name="Miyasato S.R."/>
            <person name="Simison M."/>
            <person name="Cherry J.M."/>
        </authorList>
    </citation>
    <scope>GENOME REANNOTATION</scope>
    <source>
        <strain>ATCC 204508 / S288c</strain>
    </source>
</reference>
<reference key="5">
    <citation type="journal article" date="1997" name="Cell">
        <title>The AP-3 adaptor complex is essential for cargo-selective transport to the yeast vacuole.</title>
        <authorList>
            <person name="Cowles C.R."/>
            <person name="Odorizzi G."/>
            <person name="Payne G.S."/>
            <person name="Emr S.D."/>
        </authorList>
    </citation>
    <scope>IDENTIFICATION OF THE AP-3 COMPLEX</scope>
    <scope>FUNCTION OF THE AP-3 COMPLEX</scope>
</reference>
<reference key="6">
    <citation type="journal article" date="1997" name="EMBO J.">
        <title>Suppressors of YCK-encoded yeast casein kinase 1 deficiency define the four subunits of a novel clathrin AP-like complex.</title>
        <authorList>
            <person name="Panek H.R."/>
            <person name="Stepp J.D."/>
            <person name="Engle H.M."/>
            <person name="Marks K.M."/>
            <person name="Tan P.K."/>
            <person name="Lemmon S.K."/>
            <person name="Robinson L.C."/>
        </authorList>
    </citation>
    <scope>IDENTIFICATION OF THE AP-3 COMPLEX</scope>
    <scope>FUNCTION OF THE AP-3 COMPLEX</scope>
</reference>
<reference key="7">
    <citation type="journal article" date="1999" name="Nat. Cell Biol.">
        <title>Formation of AP-3 transport intermediates requires Vps41 function.</title>
        <authorList>
            <person name="Rehling P."/>
            <person name="Darsow T."/>
            <person name="Katzmann D.J."/>
            <person name="Emr S.D."/>
        </authorList>
    </citation>
    <scope>SUBCELLULAR LOCATION</scope>
    <scope>FUNCTION OF THE AP-3 COMPLEX</scope>
</reference>
<reference key="8">
    <citation type="journal article" date="2003" name="Nature">
        <title>Global analysis of protein localization in budding yeast.</title>
        <authorList>
            <person name="Huh W.-K."/>
            <person name="Falvo J.V."/>
            <person name="Gerke L.C."/>
            <person name="Carroll A.S."/>
            <person name="Howson R.W."/>
            <person name="Weissman J.S."/>
            <person name="O'Shea E.K."/>
        </authorList>
    </citation>
    <scope>SUBCELLULAR LOCATION [LARGE SCALE ANALYSIS]</scope>
</reference>
<reference key="9">
    <citation type="journal article" date="2003" name="Nature">
        <title>Global analysis of protein expression in yeast.</title>
        <authorList>
            <person name="Ghaemmaghami S."/>
            <person name="Huh W.-K."/>
            <person name="Bower K."/>
            <person name="Howson R.W."/>
            <person name="Belle A."/>
            <person name="Dephoure N."/>
            <person name="O'Shea E.K."/>
            <person name="Weissman J.S."/>
        </authorList>
    </citation>
    <scope>LEVEL OF PROTEIN EXPRESSION [LARGE SCALE ANALYSIS]</scope>
</reference>
<reference key="10">
    <citation type="journal article" date="2007" name="J. Proteome Res.">
        <title>Large-scale phosphorylation analysis of alpha-factor-arrested Saccharomyces cerevisiae.</title>
        <authorList>
            <person name="Li X."/>
            <person name="Gerber S.A."/>
            <person name="Rudner A.D."/>
            <person name="Beausoleil S.A."/>
            <person name="Haas W."/>
            <person name="Villen J."/>
            <person name="Elias J.E."/>
            <person name="Gygi S.P."/>
        </authorList>
    </citation>
    <scope>PHOSPHORYLATION [LARGE SCALE ANALYSIS] AT SER-726</scope>
    <scope>IDENTIFICATION BY MASS SPECTROMETRY [LARGE SCALE ANALYSIS]</scope>
    <source>
        <strain>ADR376</strain>
    </source>
</reference>
<reference key="11">
    <citation type="journal article" date="2008" name="Mol. Cell. Proteomics">
        <title>A multidimensional chromatography technology for in-depth phosphoproteome analysis.</title>
        <authorList>
            <person name="Albuquerque C.P."/>
            <person name="Smolka M.B."/>
            <person name="Payne S.H."/>
            <person name="Bafna V."/>
            <person name="Eng J."/>
            <person name="Zhou H."/>
        </authorList>
    </citation>
    <scope>PHOSPHORYLATION [LARGE SCALE ANALYSIS] AT SER-698</scope>
    <scope>IDENTIFICATION BY MASS SPECTROMETRY [LARGE SCALE ANALYSIS]</scope>
</reference>
<reference key="12">
    <citation type="journal article" date="2009" name="Science">
        <title>Global analysis of Cdk1 substrate phosphorylation sites provides insights into evolution.</title>
        <authorList>
            <person name="Holt L.J."/>
            <person name="Tuch B.B."/>
            <person name="Villen J."/>
            <person name="Johnson A.D."/>
            <person name="Gygi S.P."/>
            <person name="Morgan D.O."/>
        </authorList>
    </citation>
    <scope>PHOSPHORYLATION [LARGE SCALE ANALYSIS] AT SER-693; SER-698; SER-724 AND SER-726</scope>
    <scope>IDENTIFICATION BY MASS SPECTROMETRY [LARGE SCALE ANALYSIS]</scope>
</reference>
<reference key="13">
    <citation type="journal article" date="2007" name="Proc. Natl. Acad. Sci. U.S.A.">
        <title>Protein pyrophosphorylation by inositol pyrophosphates is a posttranslational event.</title>
        <authorList>
            <person name="Bhandari R."/>
            <person name="Saiardi A."/>
            <person name="Ahmadibeni Y."/>
            <person name="Snowman A.M."/>
            <person name="Resnick A.C."/>
            <person name="Kristiansen T.Z."/>
            <person name="Molina H."/>
            <person name="Pandey A."/>
            <person name="Werner J.K. Jr."/>
            <person name="Juluri K.R."/>
            <person name="Xu Y."/>
            <person name="Prestwich G.D."/>
            <person name="Parang K."/>
            <person name="Snyder S.H."/>
        </authorList>
    </citation>
    <scope>PYROPHOSPHORYLATION</scope>
</reference>
<organism>
    <name type="scientific">Saccharomyces cerevisiae (strain ATCC 204508 / S288c)</name>
    <name type="common">Baker's yeast</name>
    <dbReference type="NCBI Taxonomy" id="559292"/>
    <lineage>
        <taxon>Eukaryota</taxon>
        <taxon>Fungi</taxon>
        <taxon>Dikarya</taxon>
        <taxon>Ascomycota</taxon>
        <taxon>Saccharomycotina</taxon>
        <taxon>Saccharomycetes</taxon>
        <taxon>Saccharomycetales</taxon>
        <taxon>Saccharomycetaceae</taxon>
        <taxon>Saccharomyces</taxon>
    </lineage>
</organism>
<evidence type="ECO:0000256" key="1">
    <source>
        <dbReference type="SAM" id="MobiDB-lite"/>
    </source>
</evidence>
<evidence type="ECO:0000269" key="2">
    <source>
    </source>
</evidence>
<evidence type="ECO:0000269" key="3">
    <source>
    </source>
</evidence>
<evidence type="ECO:0000269" key="4">
    <source>
    </source>
</evidence>
<evidence type="ECO:0000269" key="5">
    <source>
    </source>
</evidence>
<evidence type="ECO:0000269" key="6">
    <source>
    </source>
</evidence>
<evidence type="ECO:0000269" key="7">
    <source>
    </source>
</evidence>
<evidence type="ECO:0000305" key="8"/>
<evidence type="ECO:0007744" key="9">
    <source>
    </source>
</evidence>
<evidence type="ECO:0007744" key="10">
    <source>
    </source>
</evidence>
<evidence type="ECO:0007744" key="11">
    <source>
    </source>
</evidence>
<dbReference type="EMBL" id="U35411">
    <property type="protein sequence ID" value="AAC13877.1"/>
    <property type="molecule type" value="Genomic_DNA"/>
</dbReference>
<dbReference type="EMBL" id="Y07777">
    <property type="protein sequence ID" value="CAA69083.1"/>
    <property type="molecule type" value="Genomic_DNA"/>
</dbReference>
<dbReference type="EMBL" id="Z73046">
    <property type="protein sequence ID" value="CAA97290.1"/>
    <property type="molecule type" value="Genomic_DNA"/>
</dbReference>
<dbReference type="EMBL" id="BK006941">
    <property type="protein sequence ID" value="DAA08351.1"/>
    <property type="molecule type" value="Genomic_DNA"/>
</dbReference>
<dbReference type="PIR" id="S64594">
    <property type="entry name" value="S64594"/>
</dbReference>
<dbReference type="RefSeq" id="NP_011777.3">
    <property type="nucleotide sequence ID" value="NM_001181390.3"/>
</dbReference>
<dbReference type="PDB" id="7P3X">
    <property type="method" value="EM"/>
    <property type="resolution" value="9.10 A"/>
    <property type="chains" value="B=1-809"/>
</dbReference>
<dbReference type="PDB" id="7P3Y">
    <property type="method" value="EM"/>
    <property type="resolution" value="10.10 A"/>
    <property type="chains" value="B=1-809"/>
</dbReference>
<dbReference type="PDB" id="7P3Z">
    <property type="method" value="EM"/>
    <property type="resolution" value="10.50 A"/>
    <property type="chains" value="B=1-809"/>
</dbReference>
<dbReference type="PDBsum" id="7P3X"/>
<dbReference type="PDBsum" id="7P3Y"/>
<dbReference type="PDBsum" id="7P3Z"/>
<dbReference type="SMR" id="P46682"/>
<dbReference type="BioGRID" id="33512">
    <property type="interactions" value="256"/>
</dbReference>
<dbReference type="ComplexPortal" id="CPX-535">
    <property type="entry name" value="Adapter complex AP-3"/>
</dbReference>
<dbReference type="DIP" id="DIP-2684N"/>
<dbReference type="FunCoup" id="P46682">
    <property type="interactions" value="519"/>
</dbReference>
<dbReference type="IntAct" id="P46682">
    <property type="interactions" value="18"/>
</dbReference>
<dbReference type="MINT" id="P46682"/>
<dbReference type="STRING" id="4932.YGR261C"/>
<dbReference type="GlyGen" id="P46682">
    <property type="glycosylation" value="3 sites, 1 O-linked glycan (3 sites)"/>
</dbReference>
<dbReference type="iPTMnet" id="P46682"/>
<dbReference type="PaxDb" id="4932-YGR261C"/>
<dbReference type="PeptideAtlas" id="P46682"/>
<dbReference type="EnsemblFungi" id="YGR261C_mRNA">
    <property type="protein sequence ID" value="YGR261C"/>
    <property type="gene ID" value="YGR261C"/>
</dbReference>
<dbReference type="GeneID" id="853177"/>
<dbReference type="KEGG" id="sce:YGR261C"/>
<dbReference type="AGR" id="SGD:S000003493"/>
<dbReference type="SGD" id="S000003493">
    <property type="gene designation" value="APL6"/>
</dbReference>
<dbReference type="VEuPathDB" id="FungiDB:YGR261C"/>
<dbReference type="eggNOG" id="KOG1060">
    <property type="taxonomic scope" value="Eukaryota"/>
</dbReference>
<dbReference type="GeneTree" id="ENSGT00940000169094"/>
<dbReference type="HOGENOM" id="CLU_006320_3_2_1"/>
<dbReference type="InParanoid" id="P46682"/>
<dbReference type="OMA" id="HFLVRST"/>
<dbReference type="OrthoDB" id="10254310at2759"/>
<dbReference type="BioCyc" id="YEAST:G3O-30930-MONOMER"/>
<dbReference type="BioGRID-ORCS" id="853177">
    <property type="hits" value="4 hits in 10 CRISPR screens"/>
</dbReference>
<dbReference type="PRO" id="PR:P46682"/>
<dbReference type="Proteomes" id="UP000002311">
    <property type="component" value="Chromosome VII"/>
</dbReference>
<dbReference type="RNAct" id="P46682">
    <property type="molecule type" value="protein"/>
</dbReference>
<dbReference type="GO" id="GO:0030123">
    <property type="term" value="C:AP-3 adaptor complex"/>
    <property type="evidence" value="ECO:0000315"/>
    <property type="project" value="SGD"/>
</dbReference>
<dbReference type="GO" id="GO:0030665">
    <property type="term" value="C:clathrin-coated vesicle membrane"/>
    <property type="evidence" value="ECO:0007669"/>
    <property type="project" value="UniProtKB-SubCell"/>
</dbReference>
<dbReference type="GO" id="GO:0005829">
    <property type="term" value="C:cytosol"/>
    <property type="evidence" value="ECO:0007005"/>
    <property type="project" value="SGD"/>
</dbReference>
<dbReference type="GO" id="GO:0005794">
    <property type="term" value="C:Golgi apparatus"/>
    <property type="evidence" value="ECO:0007669"/>
    <property type="project" value="UniProtKB-SubCell"/>
</dbReference>
<dbReference type="GO" id="GO:0006896">
    <property type="term" value="P:Golgi to vacuole transport"/>
    <property type="evidence" value="ECO:0000315"/>
    <property type="project" value="ComplexPortal"/>
</dbReference>
<dbReference type="GO" id="GO:0006886">
    <property type="term" value="P:intracellular protein transport"/>
    <property type="evidence" value="ECO:0000303"/>
    <property type="project" value="ComplexPortal"/>
</dbReference>
<dbReference type="GO" id="GO:0006623">
    <property type="term" value="P:protein targeting to vacuole"/>
    <property type="evidence" value="ECO:0000315"/>
    <property type="project" value="SGD"/>
</dbReference>
<dbReference type="FunFam" id="1.25.10.10:FF:000720">
    <property type="entry name" value="APL6p Beta3-like subunit"/>
    <property type="match status" value="1"/>
</dbReference>
<dbReference type="Gene3D" id="1.25.10.10">
    <property type="entry name" value="Leucine-rich Repeat Variant"/>
    <property type="match status" value="1"/>
</dbReference>
<dbReference type="InterPro" id="IPR026739">
    <property type="entry name" value="AP_beta"/>
</dbReference>
<dbReference type="InterPro" id="IPR011989">
    <property type="entry name" value="ARM-like"/>
</dbReference>
<dbReference type="InterPro" id="IPR016024">
    <property type="entry name" value="ARM-type_fold"/>
</dbReference>
<dbReference type="InterPro" id="IPR002553">
    <property type="entry name" value="Clathrin/coatomer_adapt-like_N"/>
</dbReference>
<dbReference type="PANTHER" id="PTHR11134">
    <property type="entry name" value="ADAPTOR COMPLEX SUBUNIT BETA FAMILY MEMBER"/>
    <property type="match status" value="1"/>
</dbReference>
<dbReference type="Pfam" id="PF01602">
    <property type="entry name" value="Adaptin_N"/>
    <property type="match status" value="1"/>
</dbReference>
<dbReference type="SUPFAM" id="SSF48371">
    <property type="entry name" value="ARM repeat"/>
    <property type="match status" value="1"/>
</dbReference>
<gene>
    <name type="primary">APL6</name>
    <name type="synonym">YKS5</name>
    <name type="ordered locus">YGR261C</name>
    <name type="ORF">G9331</name>
</gene>
<comment type="function">
    <text evidence="2 6 7">Part of the AP-3 complex, an adaptor-related complex which is not clathrin-associated. The complex is associated with the Golgi region as well as more peripheral structures. It facilitates the budding of vesicles from the Golgi membrane and may be directly involved in trafficking to the vacuole. Required for the transport via the ALP pathway, which directs the transport of the cargo proteins PHO8 and VAM3 to the vacuole.</text>
</comment>
<comment type="subunit">
    <text>Adaptor protein complex 3 (AP-3) is a heterotetramer composed of 2 large adaptins (APL5 and APL6), a medium adaptin (APM3) and a small adaptin (APS3).</text>
</comment>
<comment type="interaction">
    <interactant intactId="EBI-2213">
        <id>P46682</id>
    </interactant>
    <interactant intactId="EBI-29702">
        <id>Q08951</id>
        <label>APL5</label>
    </interactant>
    <organismsDiffer>false</organismsDiffer>
    <experiments>6</experiments>
</comment>
<comment type="interaction">
    <interactant intactId="EBI-2213">
        <id>P46682</id>
    </interactant>
    <interactant intactId="EBI-2710">
        <id>P38153</id>
        <label>APM3</label>
    </interactant>
    <organismsDiffer>false</organismsDiffer>
    <experiments>6</experiments>
</comment>
<comment type="subcellular location">
    <subcellularLocation>
        <location evidence="2 3">Golgi apparatus</location>
    </subcellularLocation>
    <subcellularLocation>
        <location evidence="2">Cytoplasmic vesicle</location>
        <location evidence="2">Clathrin-coated vesicle membrane</location>
        <topology evidence="8">Peripheral membrane protein</topology>
        <orientation evidence="8">Cytoplasmic side</orientation>
    </subcellularLocation>
    <text evidence="2">Component of the coat surrounding the cytoplasmic face of coated vesicles located at the Golgi complex.</text>
</comment>
<comment type="PTM">
    <text evidence="5">Pyrophosphorylated by 5-diphosphoinositol pentakisphosphate (5-IP7) (PubMed:17873058). Serine pyrophosphorylation is achieved by Mg(2+)-dependent, but enzyme independent transfer of a beta-phosphate from a inositol pyrophosphate to a pre-phosphorylated serine residue (PubMed:17873058).</text>
</comment>
<comment type="miscellaneous">
    <text evidence="4">Present with 3570 molecules/cell in log phase SD medium.</text>
</comment>
<comment type="similarity">
    <text evidence="8">Belongs to the adaptor complexes large subunit family.</text>
</comment>
<accession>P46682</accession>
<accession>D6VV40</accession>
<proteinExistence type="evidence at protein level"/>
<keyword id="KW-0002">3D-structure</keyword>
<keyword id="KW-0968">Cytoplasmic vesicle</keyword>
<keyword id="KW-0333">Golgi apparatus</keyword>
<keyword id="KW-0472">Membrane</keyword>
<keyword id="KW-0597">Phosphoprotein</keyword>
<keyword id="KW-0653">Protein transport</keyword>
<keyword id="KW-1185">Reference proteome</keyword>
<keyword id="KW-0677">Repeat</keyword>
<keyword id="KW-0813">Transport</keyword>
<sequence length="809" mass="91607">MVDSIHRIASALDTAKVITREAAAVATSKLGESSYTYYSQNINPQQLVTLLNSRNSREVRDAMKRIISIMASDDDSIDVQLYFADVVKNITTNDTKVKRLIHLYLLRFAENDPNLTLLSINSLQKSLSDSNSELRCFALSALSDMKMSSLAPIILHTVKKLVTDPSAMVRGEVALAIIKLYRAGKNDYHEELLDILKELMADTDPKVISCAVLAYKECYADHLELLHGHFRRYCRIIKQLDSWSQSYLIELLIKYCKQYLPKPTVVDKSSEGSPRSCPLPDKYNEIEYPSYEVVNDPDLDLFLQSLNCLIYSSNPTVILSCCNALYQLASPLQMKNTKFIEALVRTVTMTENQGNKEMLLQAIHFLSILDQTLFLPYTKKFYVFPKDPIVASIWKIQILSTLINESNVKEIFKELKYYVASAHFPENVVIMAVKSLSRCGQLSTSWESHVMKWLIDHMESHNLSASVLDAYVNVIRMLVQKNPTKHLRIIFKLADLLTVQTSLADNARAGIVWLFGEIASIEFKICPDVLRRLIQNFSNEGPETRCQILVLSAKLLSYDIDNFKQAQVTGSEENNQNPPYYDFSGSRISQMYNAVLYLAKYDDEFDIRDRARMISSLFDSGKYEIVSLLLQAPKPTARSDDFIVSARLETHTPEIKEFFRMLPWNTEITEVGETGNDIREGAELKDYNKYKKSFSSQSFITNNSARSFTSSSNAKLTGINDGDSNSISGKGNVNTFTSQNGKKYRLQSLDEFFSDIPERKSKPRKIIKVVEESSDEDEDESEESSDDDEYSDSSLGTSSSGTSSSHLEL</sequence>
<feature type="chain" id="PRO_0000193757" description="AP-3 complex subunit beta">
    <location>
        <begin position="1"/>
        <end position="809"/>
    </location>
</feature>
<feature type="repeat" description="HEAT 1">
    <location>
        <begin position="37"/>
        <end position="76"/>
    </location>
</feature>
<feature type="repeat" description="HEAT 2">
    <location>
        <begin position="112"/>
        <end position="151"/>
    </location>
</feature>
<feature type="repeat" description="HEAT 3">
    <location>
        <begin position="153"/>
        <end position="186"/>
    </location>
</feature>
<feature type="repeat" description="HEAT 4">
    <location>
        <begin position="187"/>
        <end position="224"/>
    </location>
</feature>
<feature type="repeat" description="HEAT 5">
    <location>
        <begin position="524"/>
        <end position="561"/>
    </location>
</feature>
<feature type="region of interest" description="Disordered" evidence="1">
    <location>
        <begin position="708"/>
        <end position="739"/>
    </location>
</feature>
<feature type="region of interest" description="Disordered" evidence="1">
    <location>
        <begin position="763"/>
        <end position="809"/>
    </location>
</feature>
<feature type="compositionally biased region" description="Polar residues" evidence="1">
    <location>
        <begin position="722"/>
        <end position="739"/>
    </location>
</feature>
<feature type="compositionally biased region" description="Acidic residues" evidence="1">
    <location>
        <begin position="772"/>
        <end position="791"/>
    </location>
</feature>
<feature type="compositionally biased region" description="Low complexity" evidence="1">
    <location>
        <begin position="792"/>
        <end position="809"/>
    </location>
</feature>
<feature type="modified residue" description="Phosphoserine" evidence="11">
    <location>
        <position position="693"/>
    </location>
</feature>
<feature type="modified residue" description="Phosphoserine" evidence="10 11">
    <location>
        <position position="698"/>
    </location>
</feature>
<feature type="modified residue" description="Phosphoserine" evidence="11">
    <location>
        <position position="724"/>
    </location>
</feature>
<feature type="modified residue" description="Phosphoserine" evidence="9 11">
    <location>
        <position position="726"/>
    </location>
</feature>
<feature type="sequence conflict" description="In Ref. 1; AAC13877." evidence="8" ref="1">
    <original>TSKLGESSY</original>
    <variation>PLSWVNPP</variation>
    <location>
        <begin position="27"/>
        <end position="35"/>
    </location>
</feature>
<feature type="sequence conflict" description="In Ref. 1; AAC13877." evidence="8" ref="1">
    <original>S</original>
    <variation>T</variation>
    <location>
        <position position="724"/>
    </location>
</feature>
<feature type="sequence conflict" description="In Ref. 1; AAC13877." evidence="8" ref="1">
    <location>
        <begin position="798"/>
        <end position="802"/>
    </location>
</feature>
<protein>
    <recommendedName>
        <fullName>AP-3 complex subunit beta</fullName>
    </recommendedName>
    <alternativeName>
        <fullName>Adaptor-related protein complex 3 subunit beta</fullName>
    </alternativeName>
    <alternativeName>
        <fullName>Beta-3-adaptin</fullName>
    </alternativeName>
    <alternativeName>
        <fullName>Clathrin assembly protein complex 3 beta large chain</fullName>
    </alternativeName>
    <alternativeName>
        <fullName>Clathrin assembly protein large beta chain</fullName>
    </alternativeName>
</protein>
<name>AP3B_YEAST</name>